<comment type="function">
    <text evidence="1">Involved in DNA repair and RecF pathway recombination.</text>
</comment>
<comment type="similarity">
    <text evidence="1">Belongs to the RecO family.</text>
</comment>
<reference key="1">
    <citation type="journal article" date="2006" name="J. Bacteriol.">
        <title>Complete genome sequence of the dehalorespiring bacterium Desulfitobacterium hafniense Y51 and comparison with Dehalococcoides ethenogenes 195.</title>
        <authorList>
            <person name="Nonaka H."/>
            <person name="Keresztes G."/>
            <person name="Shinoda Y."/>
            <person name="Ikenaga Y."/>
            <person name="Abe M."/>
            <person name="Naito K."/>
            <person name="Inatomi K."/>
            <person name="Furukawa K."/>
            <person name="Inui M."/>
            <person name="Yukawa H."/>
        </authorList>
    </citation>
    <scope>NUCLEOTIDE SEQUENCE [LARGE SCALE GENOMIC DNA]</scope>
    <source>
        <strain>Y51</strain>
    </source>
</reference>
<protein>
    <recommendedName>
        <fullName evidence="1">DNA repair protein RecO</fullName>
    </recommendedName>
    <alternativeName>
        <fullName evidence="1">Recombination protein O</fullName>
    </alternativeName>
</protein>
<organism>
    <name type="scientific">Desulfitobacterium hafniense (strain Y51)</name>
    <dbReference type="NCBI Taxonomy" id="138119"/>
    <lineage>
        <taxon>Bacteria</taxon>
        <taxon>Bacillati</taxon>
        <taxon>Bacillota</taxon>
        <taxon>Clostridia</taxon>
        <taxon>Eubacteriales</taxon>
        <taxon>Desulfitobacteriaceae</taxon>
        <taxon>Desulfitobacterium</taxon>
    </lineage>
</organism>
<gene>
    <name evidence="1" type="primary">recO</name>
    <name type="ordered locus">DSY3103</name>
</gene>
<accession>Q24SV0</accession>
<proteinExistence type="inferred from homology"/>
<sequence>MGVYHADALVIRSREYGESDRLLTLFSREYGKIQAVAKGVRKPKSRQRAGAQLFTYAEYLLHKGKSLDTVNQVSPRESFPHLWTDLDMSMAATAMAELLDLATLPGQPHPELFTLTFSSLFLVESCDPALVQCTYALKLMNYLGYRPRLVECAECGQRVQGERLLFSPDAGGVVCRQCQTQGSSPAVGRWVSGGSLGLMRQLLQGELEKLNRLRWNQWSKKEILEASQYFCEQTLDKSLRSWSMGNRLVNVGQNPSGKDDLNERRDVDGTGES</sequence>
<dbReference type="EMBL" id="AP008230">
    <property type="protein sequence ID" value="BAE84892.1"/>
    <property type="molecule type" value="Genomic_DNA"/>
</dbReference>
<dbReference type="RefSeq" id="WP_011460852.1">
    <property type="nucleotide sequence ID" value="NC_007907.1"/>
</dbReference>
<dbReference type="SMR" id="Q24SV0"/>
<dbReference type="STRING" id="138119.DSY3103"/>
<dbReference type="KEGG" id="dsy:DSY3103"/>
<dbReference type="eggNOG" id="COG1381">
    <property type="taxonomic scope" value="Bacteria"/>
</dbReference>
<dbReference type="HOGENOM" id="CLU_066632_3_0_9"/>
<dbReference type="Proteomes" id="UP000001946">
    <property type="component" value="Chromosome"/>
</dbReference>
<dbReference type="GO" id="GO:0043590">
    <property type="term" value="C:bacterial nucleoid"/>
    <property type="evidence" value="ECO:0007669"/>
    <property type="project" value="TreeGrafter"/>
</dbReference>
<dbReference type="GO" id="GO:0006310">
    <property type="term" value="P:DNA recombination"/>
    <property type="evidence" value="ECO:0007669"/>
    <property type="project" value="UniProtKB-UniRule"/>
</dbReference>
<dbReference type="GO" id="GO:0006302">
    <property type="term" value="P:double-strand break repair"/>
    <property type="evidence" value="ECO:0007669"/>
    <property type="project" value="TreeGrafter"/>
</dbReference>
<dbReference type="Gene3D" id="2.40.50.140">
    <property type="entry name" value="Nucleic acid-binding proteins"/>
    <property type="match status" value="1"/>
</dbReference>
<dbReference type="Gene3D" id="1.20.1440.120">
    <property type="entry name" value="Recombination protein O, C-terminal domain"/>
    <property type="match status" value="1"/>
</dbReference>
<dbReference type="HAMAP" id="MF_00201">
    <property type="entry name" value="RecO"/>
    <property type="match status" value="1"/>
</dbReference>
<dbReference type="InterPro" id="IPR037278">
    <property type="entry name" value="ARFGAP/RecO"/>
</dbReference>
<dbReference type="InterPro" id="IPR022572">
    <property type="entry name" value="DNA_rep/recomb_RecO_N"/>
</dbReference>
<dbReference type="InterPro" id="IPR012340">
    <property type="entry name" value="NA-bd_OB-fold"/>
</dbReference>
<dbReference type="InterPro" id="IPR003717">
    <property type="entry name" value="RecO"/>
</dbReference>
<dbReference type="InterPro" id="IPR042242">
    <property type="entry name" value="RecO_C"/>
</dbReference>
<dbReference type="NCBIfam" id="TIGR00613">
    <property type="entry name" value="reco"/>
    <property type="match status" value="1"/>
</dbReference>
<dbReference type="PANTHER" id="PTHR33991">
    <property type="entry name" value="DNA REPAIR PROTEIN RECO"/>
    <property type="match status" value="1"/>
</dbReference>
<dbReference type="PANTHER" id="PTHR33991:SF1">
    <property type="entry name" value="DNA REPAIR PROTEIN RECO"/>
    <property type="match status" value="1"/>
</dbReference>
<dbReference type="Pfam" id="PF02565">
    <property type="entry name" value="RecO_C"/>
    <property type="match status" value="1"/>
</dbReference>
<dbReference type="Pfam" id="PF11967">
    <property type="entry name" value="RecO_N"/>
    <property type="match status" value="1"/>
</dbReference>
<dbReference type="SUPFAM" id="SSF57863">
    <property type="entry name" value="ArfGap/RecO-like zinc finger"/>
    <property type="match status" value="1"/>
</dbReference>
<dbReference type="SUPFAM" id="SSF50249">
    <property type="entry name" value="Nucleic acid-binding proteins"/>
    <property type="match status" value="1"/>
</dbReference>
<feature type="chain" id="PRO_0000264814" description="DNA repair protein RecO">
    <location>
        <begin position="1"/>
        <end position="273"/>
    </location>
</feature>
<feature type="region of interest" description="Disordered" evidence="2">
    <location>
        <begin position="250"/>
        <end position="273"/>
    </location>
</feature>
<feature type="compositionally biased region" description="Basic and acidic residues" evidence="2">
    <location>
        <begin position="257"/>
        <end position="273"/>
    </location>
</feature>
<evidence type="ECO:0000255" key="1">
    <source>
        <dbReference type="HAMAP-Rule" id="MF_00201"/>
    </source>
</evidence>
<evidence type="ECO:0000256" key="2">
    <source>
        <dbReference type="SAM" id="MobiDB-lite"/>
    </source>
</evidence>
<keyword id="KW-0227">DNA damage</keyword>
<keyword id="KW-0233">DNA recombination</keyword>
<keyword id="KW-0234">DNA repair</keyword>
<keyword id="KW-1185">Reference proteome</keyword>
<name>RECO_DESHY</name>